<dbReference type="EC" id="2.1.2.10" evidence="1"/>
<dbReference type="EMBL" id="CP000786">
    <property type="protein sequence ID" value="ABZ99253.1"/>
    <property type="molecule type" value="Genomic_DNA"/>
</dbReference>
<dbReference type="SMR" id="B0SQA1"/>
<dbReference type="STRING" id="456481.LEPBI_I3188"/>
<dbReference type="KEGG" id="lbi:LEPBI_I3188"/>
<dbReference type="HOGENOM" id="CLU_007884_10_2_12"/>
<dbReference type="OrthoDB" id="9774591at2"/>
<dbReference type="BioCyc" id="LBIF456481:LEPBI_RS15605-MONOMER"/>
<dbReference type="Proteomes" id="UP000001847">
    <property type="component" value="Chromosome I"/>
</dbReference>
<dbReference type="GO" id="GO:0005829">
    <property type="term" value="C:cytosol"/>
    <property type="evidence" value="ECO:0007669"/>
    <property type="project" value="TreeGrafter"/>
</dbReference>
<dbReference type="GO" id="GO:0005960">
    <property type="term" value="C:glycine cleavage complex"/>
    <property type="evidence" value="ECO:0007669"/>
    <property type="project" value="InterPro"/>
</dbReference>
<dbReference type="GO" id="GO:0004047">
    <property type="term" value="F:aminomethyltransferase activity"/>
    <property type="evidence" value="ECO:0007669"/>
    <property type="project" value="UniProtKB-UniRule"/>
</dbReference>
<dbReference type="GO" id="GO:0008483">
    <property type="term" value="F:transaminase activity"/>
    <property type="evidence" value="ECO:0007669"/>
    <property type="project" value="UniProtKB-KW"/>
</dbReference>
<dbReference type="GO" id="GO:0019464">
    <property type="term" value="P:glycine decarboxylation via glycine cleavage system"/>
    <property type="evidence" value="ECO:0007669"/>
    <property type="project" value="UniProtKB-UniRule"/>
</dbReference>
<dbReference type="Gene3D" id="2.40.30.110">
    <property type="entry name" value="Aminomethyltransferase beta-barrel domains"/>
    <property type="match status" value="1"/>
</dbReference>
<dbReference type="Gene3D" id="3.30.70.1400">
    <property type="entry name" value="Aminomethyltransferase beta-barrel domains"/>
    <property type="match status" value="1"/>
</dbReference>
<dbReference type="Gene3D" id="4.10.1250.10">
    <property type="entry name" value="Aminomethyltransferase fragment"/>
    <property type="match status" value="1"/>
</dbReference>
<dbReference type="Gene3D" id="3.30.1360.120">
    <property type="entry name" value="Probable tRNA modification gtpase trme, domain 1"/>
    <property type="match status" value="1"/>
</dbReference>
<dbReference type="HAMAP" id="MF_00259">
    <property type="entry name" value="GcvT"/>
    <property type="match status" value="1"/>
</dbReference>
<dbReference type="InterPro" id="IPR006223">
    <property type="entry name" value="GCS_T"/>
</dbReference>
<dbReference type="InterPro" id="IPR022903">
    <property type="entry name" value="GCS_T_bac"/>
</dbReference>
<dbReference type="InterPro" id="IPR013977">
    <property type="entry name" value="GCST_C"/>
</dbReference>
<dbReference type="InterPro" id="IPR006222">
    <property type="entry name" value="GCV_T_N"/>
</dbReference>
<dbReference type="InterPro" id="IPR028896">
    <property type="entry name" value="GcvT/YgfZ/DmdA"/>
</dbReference>
<dbReference type="InterPro" id="IPR029043">
    <property type="entry name" value="GcvT/YgfZ_C"/>
</dbReference>
<dbReference type="InterPro" id="IPR027266">
    <property type="entry name" value="TrmE/GcvT_dom1"/>
</dbReference>
<dbReference type="NCBIfam" id="TIGR00528">
    <property type="entry name" value="gcvT"/>
    <property type="match status" value="1"/>
</dbReference>
<dbReference type="NCBIfam" id="NF001567">
    <property type="entry name" value="PRK00389.1"/>
    <property type="match status" value="1"/>
</dbReference>
<dbReference type="PANTHER" id="PTHR43757">
    <property type="entry name" value="AMINOMETHYLTRANSFERASE"/>
    <property type="match status" value="1"/>
</dbReference>
<dbReference type="PANTHER" id="PTHR43757:SF2">
    <property type="entry name" value="AMINOMETHYLTRANSFERASE, MITOCHONDRIAL"/>
    <property type="match status" value="1"/>
</dbReference>
<dbReference type="Pfam" id="PF01571">
    <property type="entry name" value="GCV_T"/>
    <property type="match status" value="1"/>
</dbReference>
<dbReference type="Pfam" id="PF08669">
    <property type="entry name" value="GCV_T_C"/>
    <property type="match status" value="1"/>
</dbReference>
<dbReference type="PIRSF" id="PIRSF006487">
    <property type="entry name" value="GcvT"/>
    <property type="match status" value="1"/>
</dbReference>
<dbReference type="SUPFAM" id="SSF101790">
    <property type="entry name" value="Aminomethyltransferase beta-barrel domain"/>
    <property type="match status" value="1"/>
</dbReference>
<dbReference type="SUPFAM" id="SSF103025">
    <property type="entry name" value="Folate-binding domain"/>
    <property type="match status" value="1"/>
</dbReference>
<accession>B0SQA1</accession>
<comment type="function">
    <text evidence="1">The glycine cleavage system catalyzes the degradation of glycine.</text>
</comment>
<comment type="catalytic activity">
    <reaction evidence="1">
        <text>N(6)-[(R)-S(8)-aminomethyldihydrolipoyl]-L-lysyl-[protein] + (6S)-5,6,7,8-tetrahydrofolate = N(6)-[(R)-dihydrolipoyl]-L-lysyl-[protein] + (6R)-5,10-methylene-5,6,7,8-tetrahydrofolate + NH4(+)</text>
        <dbReference type="Rhea" id="RHEA:16945"/>
        <dbReference type="Rhea" id="RHEA-COMP:10475"/>
        <dbReference type="Rhea" id="RHEA-COMP:10492"/>
        <dbReference type="ChEBI" id="CHEBI:15636"/>
        <dbReference type="ChEBI" id="CHEBI:28938"/>
        <dbReference type="ChEBI" id="CHEBI:57453"/>
        <dbReference type="ChEBI" id="CHEBI:83100"/>
        <dbReference type="ChEBI" id="CHEBI:83143"/>
        <dbReference type="EC" id="2.1.2.10"/>
    </reaction>
</comment>
<comment type="subunit">
    <text evidence="1">The glycine cleavage system is composed of four proteins: P, T, L and H.</text>
</comment>
<comment type="similarity">
    <text evidence="1">Belongs to the GcvT family.</text>
</comment>
<protein>
    <recommendedName>
        <fullName evidence="1">Aminomethyltransferase</fullName>
        <ecNumber evidence="1">2.1.2.10</ecNumber>
    </recommendedName>
    <alternativeName>
        <fullName evidence="1">Glycine cleavage system T protein</fullName>
    </alternativeName>
</protein>
<sequence length="370" mass="41111">MELKQTPLHSIHKEMGAKMVPFGGWDMPVQYTGIIQEHLATRANAGIFDVSHMGEIFVTGDANDVLDFLESVTCNTISTMKEGQVQYNAVVNEVGGLVDDITVYKFNDTKYMICSNASNFEAVTQHLLKYVKGNVSIANDSKNWHQIALQGPKADAIFTKYLGKDLSSILYYHFEEMNWRGETIIVSRTGYTGEDGFEIYTSNALGVTLWKELLEIGKDFGLVPVGLGARDTLRLEAKYPLYGHELNAEWTPVESGINFIVKEKSKPYLGYDRIIADKKNGPKSKVVGVRLLEPGVLRENFPIFAADGKEIGKTTSGTHSPSRKESLGLAILQTEFAKNQTEVFVEIRGQKKLAKVETGAFVQGSVRNNR</sequence>
<feature type="chain" id="PRO_1000204639" description="Aminomethyltransferase">
    <location>
        <begin position="1"/>
        <end position="370"/>
    </location>
</feature>
<reference key="1">
    <citation type="journal article" date="2008" name="PLoS ONE">
        <title>Genome sequence of the saprophyte Leptospira biflexa provides insights into the evolution of Leptospira and the pathogenesis of leptospirosis.</title>
        <authorList>
            <person name="Picardeau M."/>
            <person name="Bulach D.M."/>
            <person name="Bouchier C."/>
            <person name="Zuerner R.L."/>
            <person name="Zidane N."/>
            <person name="Wilson P.J."/>
            <person name="Creno S."/>
            <person name="Kuczek E.S."/>
            <person name="Bommezzadri S."/>
            <person name="Davis J.C."/>
            <person name="McGrath A."/>
            <person name="Johnson M.J."/>
            <person name="Boursaux-Eude C."/>
            <person name="Seemann T."/>
            <person name="Rouy Z."/>
            <person name="Coppel R.L."/>
            <person name="Rood J.I."/>
            <person name="Lajus A."/>
            <person name="Davies J.K."/>
            <person name="Medigue C."/>
            <person name="Adler B."/>
        </authorList>
    </citation>
    <scope>NUCLEOTIDE SEQUENCE [LARGE SCALE GENOMIC DNA]</scope>
    <source>
        <strain>Patoc 1 / ATCC 23582 / Paris</strain>
    </source>
</reference>
<organism>
    <name type="scientific">Leptospira biflexa serovar Patoc (strain Patoc 1 / ATCC 23582 / Paris)</name>
    <dbReference type="NCBI Taxonomy" id="456481"/>
    <lineage>
        <taxon>Bacteria</taxon>
        <taxon>Pseudomonadati</taxon>
        <taxon>Spirochaetota</taxon>
        <taxon>Spirochaetia</taxon>
        <taxon>Leptospirales</taxon>
        <taxon>Leptospiraceae</taxon>
        <taxon>Leptospira</taxon>
    </lineage>
</organism>
<proteinExistence type="inferred from homology"/>
<keyword id="KW-0032">Aminotransferase</keyword>
<keyword id="KW-1185">Reference proteome</keyword>
<keyword id="KW-0808">Transferase</keyword>
<gene>
    <name evidence="1" type="primary">gcvT</name>
    <name type="ordered locus">LEPBI_I3188</name>
</gene>
<name>GCST_LEPBP</name>
<evidence type="ECO:0000255" key="1">
    <source>
        <dbReference type="HAMAP-Rule" id="MF_00259"/>
    </source>
</evidence>